<reference key="1">
    <citation type="journal article" date="1991" name="Mol. Microbiol.">
        <title>Organization of the fimbrial gene region of Bacteroides nodosus: class I and class II strains.</title>
        <authorList>
            <person name="Hobbs M."/>
            <person name="Dalrymple B.P."/>
            <person name="Cox P.T."/>
            <person name="Livingstone S.P."/>
            <person name="Delaney S.F."/>
            <person name="Mattick J.S."/>
        </authorList>
    </citation>
    <scope>NUCLEOTIDE SEQUENCE [GENOMIC DNA]</scope>
    <source>
        <strain>Serogroup G1 isolate VCS1220</strain>
    </source>
</reference>
<keyword id="KW-1029">Fimbrium biogenesis</keyword>
<protein>
    <recommendedName>
        <fullName>Fimbrial assembly protein, serogroup G1</fullName>
    </recommendedName>
</protein>
<proteinExistence type="predicted"/>
<dbReference type="EMBL" id="X52409">
    <property type="protein sequence ID" value="CAA36661.1"/>
    <property type="molecule type" value="Genomic_DNA"/>
</dbReference>
<dbReference type="PIR" id="S15246">
    <property type="entry name" value="S15246"/>
</dbReference>
<dbReference type="SMR" id="P17833"/>
<name>FIMBG_DICNO</name>
<sequence>MNKQRFLFAAKISGIHFLLSLVVALALAGLIFFVWYPFPYQKIMGSFK</sequence>
<gene>
    <name type="primary">fimB</name>
</gene>
<accession>P17833</accession>
<organism>
    <name type="scientific">Dichelobacter nodosus</name>
    <name type="common">Bacteroides nodosus</name>
    <dbReference type="NCBI Taxonomy" id="870"/>
    <lineage>
        <taxon>Bacteria</taxon>
        <taxon>Pseudomonadati</taxon>
        <taxon>Pseudomonadota</taxon>
        <taxon>Gammaproteobacteria</taxon>
        <taxon>Cardiobacteriales</taxon>
        <taxon>Cardiobacteriaceae</taxon>
        <taxon>Dichelobacter</taxon>
    </lineage>
</organism>
<feature type="chain" id="PRO_0000087248" description="Fimbrial assembly protein, serogroup G1">
    <location>
        <begin position="1"/>
        <end position="48" status="greater than"/>
    </location>
</feature>
<feature type="non-terminal residue">
    <location>
        <position position="48"/>
    </location>
</feature>